<reference key="1">
    <citation type="journal article" date="2003" name="J. Virol.">
        <title>Novel member of the CD209 (DC-SIGN) gene family in primates.</title>
        <authorList>
            <person name="Bashirova A.A."/>
            <person name="Wu L."/>
            <person name="Cheng J."/>
            <person name="Martin T.D."/>
            <person name="Martin M.P."/>
            <person name="Benveniste R.E."/>
            <person name="Lifson J.D."/>
            <person name="Kewalramani V.N."/>
            <person name="Hughes A."/>
            <person name="Carrington M."/>
        </authorList>
    </citation>
    <scope>NUCLEOTIDE SEQUENCE [MRNA]</scope>
    <scope>TISSUE SPECIFICITY</scope>
    <scope>INTERACTION WITH ICAM3; HIV-1 AND SIV</scope>
</reference>
<name>209L2_MACMU</name>
<accession>Q8MIS5</accession>
<comment type="function">
    <text evidence="1">Probable pathogen-recognition receptor involved in peripheral immune surveillance in liver. May mediate the endocytosis of pathogens which are subsequently degraded in lysosomal compartments. Probably recognizes in a calcium-dependent manner high mannose N-linked oligosaccharides in a variety of pathogen antigens. Is a receptor for ICAM3, probably by binding to mannose-like carbohydrates (By similarity).</text>
</comment>
<comment type="subcellular location">
    <subcellularLocation>
        <location evidence="1">Membrane</location>
        <topology evidence="1">Single-pass type II membrane protein</topology>
    </subcellularLocation>
</comment>
<comment type="tissue specificity">
    <text evidence="4">Predominantly expressed in liver and axillary lymph nodes. At very low levels also found in other tissues.</text>
</comment>
<comment type="miscellaneous">
    <text>In vitro, is a weak receptor for HIV-1 and SIV and poorly transmits HIV-1 to permissive T-cells relative to CD209.</text>
</comment>
<proteinExistence type="evidence at protein level"/>
<gene>
    <name type="primary">CD209L2</name>
</gene>
<feature type="chain" id="PRO_0000046631" description="CD209 antigen-like protein 2">
    <location>
        <begin position="1"/>
        <end position="256"/>
    </location>
</feature>
<feature type="topological domain" description="Cytoplasmic" evidence="2">
    <location>
        <begin position="1"/>
        <end position="50"/>
    </location>
</feature>
<feature type="transmembrane region" description="Helical; Signal-anchor for type II membrane protein" evidence="2">
    <location>
        <begin position="51"/>
        <end position="71"/>
    </location>
</feature>
<feature type="topological domain" description="Extracellular" evidence="2">
    <location>
        <begin position="72"/>
        <end position="240"/>
    </location>
</feature>
<feature type="domain" description="C-type lectin" evidence="3">
    <location>
        <begin position="114"/>
        <end position="230"/>
    </location>
</feature>
<feature type="short sequence motif" description="Endocytosis signal" evidence="1">
    <location>
        <begin position="14"/>
        <end position="15"/>
    </location>
</feature>
<feature type="binding site" evidence="1">
    <location>
        <position position="199"/>
    </location>
    <ligand>
        <name>Ca(2+)</name>
        <dbReference type="ChEBI" id="CHEBI:29108"/>
    </ligand>
</feature>
<feature type="binding site" evidence="1">
    <location>
        <position position="201"/>
    </location>
    <ligand>
        <name>Ca(2+)</name>
        <dbReference type="ChEBI" id="CHEBI:29108"/>
    </ligand>
</feature>
<feature type="binding site" evidence="1">
    <location>
        <position position="203"/>
    </location>
    <ligand>
        <name>Ca(2+)</name>
        <dbReference type="ChEBI" id="CHEBI:29108"/>
    </ligand>
</feature>
<feature type="binding site" evidence="1">
    <location>
        <position position="206"/>
    </location>
    <ligand>
        <name>Ca(2+)</name>
        <dbReference type="ChEBI" id="CHEBI:29108"/>
    </ligand>
</feature>
<feature type="binding site" evidence="1">
    <location>
        <position position="217"/>
    </location>
    <ligand>
        <name>Ca(2+)</name>
        <dbReference type="ChEBI" id="CHEBI:29108"/>
    </ligand>
</feature>
<feature type="binding site" evidence="1">
    <location>
        <position position="218"/>
    </location>
    <ligand>
        <name>Ca(2+)</name>
        <dbReference type="ChEBI" id="CHEBI:29108"/>
    </ligand>
</feature>
<feature type="disulfide bond" evidence="3">
    <location>
        <begin position="108"/>
        <end position="119"/>
    </location>
</feature>
<feature type="disulfide bond" evidence="3">
    <location>
        <begin position="136"/>
        <end position="229"/>
    </location>
</feature>
<feature type="disulfide bond" evidence="3">
    <location>
        <begin position="208"/>
        <end position="221"/>
    </location>
</feature>
<dbReference type="EMBL" id="AY074781">
    <property type="protein sequence ID" value="AAL71882.1"/>
    <property type="molecule type" value="mRNA"/>
</dbReference>
<dbReference type="RefSeq" id="NP_001028123.1">
    <property type="nucleotide sequence ID" value="NM_001032951.1"/>
</dbReference>
<dbReference type="SMR" id="Q8MIS5"/>
<dbReference type="GeneID" id="574373"/>
<dbReference type="KEGG" id="mcc:574373"/>
<dbReference type="CTD" id="574373"/>
<dbReference type="InParanoid" id="Q8MIS5"/>
<dbReference type="OrthoDB" id="8950604at2759"/>
<dbReference type="Proteomes" id="UP000006718">
    <property type="component" value="Unassembled WGS sequence"/>
</dbReference>
<dbReference type="GO" id="GO:0009897">
    <property type="term" value="C:external side of plasma membrane"/>
    <property type="evidence" value="ECO:0000318"/>
    <property type="project" value="GO_Central"/>
</dbReference>
<dbReference type="GO" id="GO:0005537">
    <property type="term" value="F:D-mannose binding"/>
    <property type="evidence" value="ECO:0000318"/>
    <property type="project" value="GO_Central"/>
</dbReference>
<dbReference type="GO" id="GO:0046872">
    <property type="term" value="F:metal ion binding"/>
    <property type="evidence" value="ECO:0007669"/>
    <property type="project" value="UniProtKB-KW"/>
</dbReference>
<dbReference type="GO" id="GO:0038187">
    <property type="term" value="F:pattern recognition receptor activity"/>
    <property type="evidence" value="ECO:0000318"/>
    <property type="project" value="GO_Central"/>
</dbReference>
<dbReference type="GO" id="GO:0002250">
    <property type="term" value="P:adaptive immune response"/>
    <property type="evidence" value="ECO:0007669"/>
    <property type="project" value="UniProtKB-KW"/>
</dbReference>
<dbReference type="GO" id="GO:0006897">
    <property type="term" value="P:endocytosis"/>
    <property type="evidence" value="ECO:0007669"/>
    <property type="project" value="UniProtKB-KW"/>
</dbReference>
<dbReference type="GO" id="GO:0006955">
    <property type="term" value="P:immune response"/>
    <property type="evidence" value="ECO:0000318"/>
    <property type="project" value="GO_Central"/>
</dbReference>
<dbReference type="GO" id="GO:0045087">
    <property type="term" value="P:innate immune response"/>
    <property type="evidence" value="ECO:0007669"/>
    <property type="project" value="UniProtKB-KW"/>
</dbReference>
<dbReference type="CDD" id="cd03590">
    <property type="entry name" value="CLECT_DC-SIGN_like"/>
    <property type="match status" value="1"/>
</dbReference>
<dbReference type="FunFam" id="3.10.100.10:FF:000044">
    <property type="entry name" value="CD209 antigen, isoform CRA_b"/>
    <property type="match status" value="1"/>
</dbReference>
<dbReference type="Gene3D" id="3.10.100.10">
    <property type="entry name" value="Mannose-Binding Protein A, subunit A"/>
    <property type="match status" value="1"/>
</dbReference>
<dbReference type="InterPro" id="IPR001304">
    <property type="entry name" value="C-type_lectin-like"/>
</dbReference>
<dbReference type="InterPro" id="IPR016186">
    <property type="entry name" value="C-type_lectin-like/link_sf"/>
</dbReference>
<dbReference type="InterPro" id="IPR018378">
    <property type="entry name" value="C-type_lectin_CS"/>
</dbReference>
<dbReference type="InterPro" id="IPR051379">
    <property type="entry name" value="C-type_Lectin_Receptor_IMM"/>
</dbReference>
<dbReference type="InterPro" id="IPR033989">
    <property type="entry name" value="CD209-like_CTLD"/>
</dbReference>
<dbReference type="InterPro" id="IPR016187">
    <property type="entry name" value="CTDL_fold"/>
</dbReference>
<dbReference type="PANTHER" id="PTHR46746:SF9">
    <property type="entry name" value="CD209 ANTIGEN-LIKE PROTEIN C-LIKE"/>
    <property type="match status" value="1"/>
</dbReference>
<dbReference type="PANTHER" id="PTHR46746">
    <property type="entry name" value="KILLER CELL LECTIN-LIKE RECEPTOR SUBFAMILY F MEMBER 2"/>
    <property type="match status" value="1"/>
</dbReference>
<dbReference type="Pfam" id="PF00059">
    <property type="entry name" value="Lectin_C"/>
    <property type="match status" value="1"/>
</dbReference>
<dbReference type="SMART" id="SM00034">
    <property type="entry name" value="CLECT"/>
    <property type="match status" value="1"/>
</dbReference>
<dbReference type="SUPFAM" id="SSF56436">
    <property type="entry name" value="C-type lectin-like"/>
    <property type="match status" value="1"/>
</dbReference>
<dbReference type="PROSITE" id="PS00615">
    <property type="entry name" value="C_TYPE_LECTIN_1"/>
    <property type="match status" value="1"/>
</dbReference>
<dbReference type="PROSITE" id="PS50041">
    <property type="entry name" value="C_TYPE_LECTIN_2"/>
    <property type="match status" value="1"/>
</dbReference>
<protein>
    <recommendedName>
        <fullName>CD209 antigen-like protein 2</fullName>
    </recommendedName>
    <cdAntigenName>CD209</cdAntigenName>
</protein>
<keyword id="KW-1064">Adaptive immunity</keyword>
<keyword id="KW-0106">Calcium</keyword>
<keyword id="KW-1015">Disulfide bond</keyword>
<keyword id="KW-0254">Endocytosis</keyword>
<keyword id="KW-0391">Immunity</keyword>
<keyword id="KW-0399">Innate immunity</keyword>
<keyword id="KW-0430">Lectin</keyword>
<keyword id="KW-0465">Mannose-binding</keyword>
<keyword id="KW-0472">Membrane</keyword>
<keyword id="KW-0479">Metal-binding</keyword>
<keyword id="KW-0675">Receptor</keyword>
<keyword id="KW-1185">Reference proteome</keyword>
<keyword id="KW-0735">Signal-anchor</keyword>
<keyword id="KW-0812">Transmembrane</keyword>
<keyword id="KW-1133">Transmembrane helix</keyword>
<organism>
    <name type="scientific">Macaca mulatta</name>
    <name type="common">Rhesus macaque</name>
    <dbReference type="NCBI Taxonomy" id="9544"/>
    <lineage>
        <taxon>Eukaryota</taxon>
        <taxon>Metazoa</taxon>
        <taxon>Chordata</taxon>
        <taxon>Craniata</taxon>
        <taxon>Vertebrata</taxon>
        <taxon>Euteleostomi</taxon>
        <taxon>Mammalia</taxon>
        <taxon>Eutheria</taxon>
        <taxon>Euarchontoglires</taxon>
        <taxon>Primates</taxon>
        <taxon>Haplorrhini</taxon>
        <taxon>Catarrhini</taxon>
        <taxon>Cercopithecidae</taxon>
        <taxon>Cercopithecinae</taxon>
        <taxon>Macaca</taxon>
    </lineage>
</organism>
<sequence length="256" mass="28867">MSDSKEPRAQPLGLLEEEELITSSMNFFPRDFGFRQTRGYKSLAGCLGHAPLVLPLLFFTLFTGLLVAILVQVSKNPSSQRLDQSKQDEISQDLSQLKAAVERLCRPCPWEWTFFQGNCYFISNSQRNWHDSITACQEVGAQLVVIKSAEEQNFLQLQSSRSNRFAWMGLSDLNQEDMWQWVDDSPLSTSFKQYWNRGEPNNIGEEDCVEFNGNGWNDDKCSAAKFWICKKSAASCSRDEGQLLSSASASPIAHAA</sequence>
<evidence type="ECO:0000250" key="1"/>
<evidence type="ECO:0000255" key="2"/>
<evidence type="ECO:0000255" key="3">
    <source>
        <dbReference type="PROSITE-ProRule" id="PRU00040"/>
    </source>
</evidence>
<evidence type="ECO:0000269" key="4">
    <source>
    </source>
</evidence>